<keyword id="KW-0131">Cell cycle</keyword>
<keyword id="KW-0132">Cell division</keyword>
<keyword id="KW-0961">Cell wall biogenesis/degradation</keyword>
<keyword id="KW-1185">Reference proteome</keyword>
<keyword id="KW-0677">Repeat</keyword>
<keyword id="KW-0853">WD repeat</keyword>
<comment type="function">
    <text evidence="1">Involved in cell wall metabolism and required for the separation of the mother and daughter cells.</text>
</comment>
<comment type="similarity">
    <text evidence="3">Belongs to the WD repeat DSE1 family.</text>
</comment>
<organism>
    <name type="scientific">Debaryomyces hansenii (strain ATCC 36239 / CBS 767 / BCRC 21394 / JCM 1990 / NBRC 0083 / IGC 2968)</name>
    <name type="common">Yeast</name>
    <name type="synonym">Torulaspora hansenii</name>
    <dbReference type="NCBI Taxonomy" id="284592"/>
    <lineage>
        <taxon>Eukaryota</taxon>
        <taxon>Fungi</taxon>
        <taxon>Dikarya</taxon>
        <taxon>Ascomycota</taxon>
        <taxon>Saccharomycotina</taxon>
        <taxon>Pichiomycetes</taxon>
        <taxon>Debaryomycetaceae</taxon>
        <taxon>Debaryomyces</taxon>
    </lineage>
</organism>
<reference key="1">
    <citation type="journal article" date="2004" name="Nature">
        <title>Genome evolution in yeasts.</title>
        <authorList>
            <person name="Dujon B."/>
            <person name="Sherman D."/>
            <person name="Fischer G."/>
            <person name="Durrens P."/>
            <person name="Casaregola S."/>
            <person name="Lafontaine I."/>
            <person name="de Montigny J."/>
            <person name="Marck C."/>
            <person name="Neuveglise C."/>
            <person name="Talla E."/>
            <person name="Goffard N."/>
            <person name="Frangeul L."/>
            <person name="Aigle M."/>
            <person name="Anthouard V."/>
            <person name="Babour A."/>
            <person name="Barbe V."/>
            <person name="Barnay S."/>
            <person name="Blanchin S."/>
            <person name="Beckerich J.-M."/>
            <person name="Beyne E."/>
            <person name="Bleykasten C."/>
            <person name="Boisrame A."/>
            <person name="Boyer J."/>
            <person name="Cattolico L."/>
            <person name="Confanioleri F."/>
            <person name="de Daruvar A."/>
            <person name="Despons L."/>
            <person name="Fabre E."/>
            <person name="Fairhead C."/>
            <person name="Ferry-Dumazet H."/>
            <person name="Groppi A."/>
            <person name="Hantraye F."/>
            <person name="Hennequin C."/>
            <person name="Jauniaux N."/>
            <person name="Joyet P."/>
            <person name="Kachouri R."/>
            <person name="Kerrest A."/>
            <person name="Koszul R."/>
            <person name="Lemaire M."/>
            <person name="Lesur I."/>
            <person name="Ma L."/>
            <person name="Muller H."/>
            <person name="Nicaud J.-M."/>
            <person name="Nikolski M."/>
            <person name="Oztas S."/>
            <person name="Ozier-Kalogeropoulos O."/>
            <person name="Pellenz S."/>
            <person name="Potier S."/>
            <person name="Richard G.-F."/>
            <person name="Straub M.-L."/>
            <person name="Suleau A."/>
            <person name="Swennen D."/>
            <person name="Tekaia F."/>
            <person name="Wesolowski-Louvel M."/>
            <person name="Westhof E."/>
            <person name="Wirth B."/>
            <person name="Zeniou-Meyer M."/>
            <person name="Zivanovic Y."/>
            <person name="Bolotin-Fukuhara M."/>
            <person name="Thierry A."/>
            <person name="Bouchier C."/>
            <person name="Caudron B."/>
            <person name="Scarpelli C."/>
            <person name="Gaillardin C."/>
            <person name="Weissenbach J."/>
            <person name="Wincker P."/>
            <person name="Souciet J.-L."/>
        </authorList>
    </citation>
    <scope>NUCLEOTIDE SEQUENCE [LARGE SCALE GENOMIC DNA]</scope>
    <source>
        <strain>ATCC 36239 / CBS 767 / BCRC 21394 / JCM 1990 / NBRC 0083 / IGC 2968</strain>
    </source>
</reference>
<dbReference type="EMBL" id="CR382136">
    <property type="protein sequence ID" value="CAG86766.2"/>
    <property type="molecule type" value="Genomic_DNA"/>
</dbReference>
<dbReference type="RefSeq" id="XP_458628.2">
    <property type="nucleotide sequence ID" value="XM_458628.1"/>
</dbReference>
<dbReference type="SMR" id="Q6BT42"/>
<dbReference type="FunCoup" id="Q6BT42">
    <property type="interactions" value="30"/>
</dbReference>
<dbReference type="STRING" id="284592.Q6BT42"/>
<dbReference type="GeneID" id="2901735"/>
<dbReference type="KEGG" id="dha:DEHA2D03696g"/>
<dbReference type="VEuPathDB" id="FungiDB:DEHA2D03696g"/>
<dbReference type="eggNOG" id="ENOG502S551">
    <property type="taxonomic scope" value="Eukaryota"/>
</dbReference>
<dbReference type="HOGENOM" id="CLU_016851_1_0_1"/>
<dbReference type="InParanoid" id="Q6BT42"/>
<dbReference type="OMA" id="VKRFNHR"/>
<dbReference type="OrthoDB" id="361494at2759"/>
<dbReference type="Proteomes" id="UP000000599">
    <property type="component" value="Chromosome D"/>
</dbReference>
<dbReference type="GO" id="GO:0051301">
    <property type="term" value="P:cell division"/>
    <property type="evidence" value="ECO:0007669"/>
    <property type="project" value="UniProtKB-KW"/>
</dbReference>
<dbReference type="GO" id="GO:0071555">
    <property type="term" value="P:cell wall organization"/>
    <property type="evidence" value="ECO:0007669"/>
    <property type="project" value="UniProtKB-KW"/>
</dbReference>
<dbReference type="Gene3D" id="2.130.10.10">
    <property type="entry name" value="YVTN repeat-like/Quinoprotein amine dehydrogenase"/>
    <property type="match status" value="1"/>
</dbReference>
<dbReference type="InterPro" id="IPR015943">
    <property type="entry name" value="WD40/YVTN_repeat-like_dom_sf"/>
</dbReference>
<dbReference type="InterPro" id="IPR036322">
    <property type="entry name" value="WD40_repeat_dom_sf"/>
</dbReference>
<dbReference type="InterPro" id="IPR001680">
    <property type="entry name" value="WD40_rpt"/>
</dbReference>
<dbReference type="InterPro" id="IPR050459">
    <property type="entry name" value="WD_repeat_RBAP46/RBAP48/MSI1"/>
</dbReference>
<dbReference type="PANTHER" id="PTHR22850">
    <property type="entry name" value="WD40 REPEAT FAMILY"/>
    <property type="match status" value="1"/>
</dbReference>
<dbReference type="Pfam" id="PF00400">
    <property type="entry name" value="WD40"/>
    <property type="match status" value="2"/>
</dbReference>
<dbReference type="SMART" id="SM00320">
    <property type="entry name" value="WD40"/>
    <property type="match status" value="3"/>
</dbReference>
<dbReference type="SUPFAM" id="SSF50978">
    <property type="entry name" value="WD40 repeat-like"/>
    <property type="match status" value="1"/>
</dbReference>
<dbReference type="PROSITE" id="PS50082">
    <property type="entry name" value="WD_REPEATS_2"/>
    <property type="match status" value="1"/>
</dbReference>
<dbReference type="PROSITE" id="PS50294">
    <property type="entry name" value="WD_REPEATS_REGION"/>
    <property type="match status" value="1"/>
</dbReference>
<proteinExistence type="inferred from homology"/>
<gene>
    <name type="primary">DSE1</name>
    <name type="ordered locus">DEHA2D03696g</name>
</gene>
<sequence>MNEYYEPTLLFRQNAVKKYSPELSPVSSMSSLDLPKSNNSSSSWLLDNHNPKDTEILNKSCSLNRLNIKSNYWKIPDNDMSLTSMALSRQGDSNKSLLGISSANDDSNLFIYELDLAENYLTHNNTISLPNVHAMRWVPQMGNNELSLITGNSKGYAHLVSIPNSNEEGQSAEIVKRFNHRKHLKSINKDPSIASHTSTDITKLNFMDKSMDLLSLYDNNLFLWDINGCDSQVRPKPISISSIPGIVNFDPIPHSSNSVGICGQFGVSLFDTRQPKFSVPSSVMKQANKRKLGANVIRWSPNDDNVFAASHMDGVIRLWDIRKQDYFASLDGHQGKKIISIEWNKNDLFSGGRDGNIVHWDLTSDINEYPKPDITNCGLKEGLNSIKFNPVKNSVEKTINQRQCGTVLPASNTNIVDMCSVSLTSHNEEDVKVLSIDSSSFLGLHSKIFDAVKVNINSEKTYYTDDDISLLLAAQQSSLSTLVNDSTENVTKPLTISRMPTTKITHDVAPPAIPTPASVVPTTPNMSNDTLAEGPDEFVEVGDIIRLKEPKFSFSNYNDSVFSVDSNHDIKSSPSSTTSRGSFGESSSSISTNPTIVEASPISHKRDPSDIFNFKTDFDFGLGLNDYKFDESLVDRSFDRMLSLKTNATNYYSVYSS</sequence>
<evidence type="ECO:0000250" key="1"/>
<evidence type="ECO:0000256" key="2">
    <source>
        <dbReference type="SAM" id="MobiDB-lite"/>
    </source>
</evidence>
<evidence type="ECO:0000305" key="3"/>
<name>DSE1_DEBHA</name>
<protein>
    <recommendedName>
        <fullName>Protein DSE1</fullName>
    </recommendedName>
    <alternativeName>
        <fullName>Daughter-specific expression protein 1</fullName>
    </alternativeName>
</protein>
<accession>Q6BT42</accession>
<feature type="chain" id="PRO_0000285347" description="Protein DSE1">
    <location>
        <begin position="1"/>
        <end position="657"/>
    </location>
</feature>
<feature type="repeat" description="WD 1">
    <location>
        <begin position="77"/>
        <end position="122"/>
    </location>
</feature>
<feature type="repeat" description="WD 2">
    <location>
        <begin position="127"/>
        <end position="170"/>
    </location>
</feature>
<feature type="repeat" description="WD 3">
    <location>
        <begin position="196"/>
        <end position="234"/>
    </location>
</feature>
<feature type="repeat" description="WD 4">
    <location>
        <begin position="287"/>
        <end position="329"/>
    </location>
</feature>
<feature type="repeat" description="WD 5">
    <location>
        <begin position="332"/>
        <end position="370"/>
    </location>
</feature>
<feature type="region of interest" description="Disordered" evidence="2">
    <location>
        <begin position="565"/>
        <end position="602"/>
    </location>
</feature>
<feature type="compositionally biased region" description="Low complexity" evidence="2">
    <location>
        <begin position="572"/>
        <end position="592"/>
    </location>
</feature>